<reference key="1">
    <citation type="journal article" date="2000" name="Nature">
        <title>Complete genome sequence of Pseudomonas aeruginosa PAO1, an opportunistic pathogen.</title>
        <authorList>
            <person name="Stover C.K."/>
            <person name="Pham X.-Q.T."/>
            <person name="Erwin A.L."/>
            <person name="Mizoguchi S.D."/>
            <person name="Warrener P."/>
            <person name="Hickey M.J."/>
            <person name="Brinkman F.S.L."/>
            <person name="Hufnagle W.O."/>
            <person name="Kowalik D.J."/>
            <person name="Lagrou M."/>
            <person name="Garber R.L."/>
            <person name="Goltry L."/>
            <person name="Tolentino E."/>
            <person name="Westbrock-Wadman S."/>
            <person name="Yuan Y."/>
            <person name="Brody L.L."/>
            <person name="Coulter S.N."/>
            <person name="Folger K.R."/>
            <person name="Kas A."/>
            <person name="Larbig K."/>
            <person name="Lim R.M."/>
            <person name="Smith K.A."/>
            <person name="Spencer D.H."/>
            <person name="Wong G.K.-S."/>
            <person name="Wu Z."/>
            <person name="Paulsen I.T."/>
            <person name="Reizer J."/>
            <person name="Saier M.H. Jr."/>
            <person name="Hancock R.E.W."/>
            <person name="Lory S."/>
            <person name="Olson M.V."/>
        </authorList>
    </citation>
    <scope>NUCLEOTIDE SEQUENCE [LARGE SCALE GENOMIC DNA]</scope>
    <source>
        <strain>ATCC 15692 / DSM 22644 / CIP 104116 / JCM 14847 / LMG 12228 / 1C / PRS 101 / PAO1</strain>
    </source>
</reference>
<reference key="2">
    <citation type="journal article" date="2014" name="FEBS Open Bio">
        <title>Identification and characterization of trans-3-hydroxy-L-proline dehydratase and Delta(1)-pyrroline-2-carboxylate reductase involved in trans-3-hydroxy-L-proline metabolism of bacteria.</title>
        <authorList>
            <person name="Watanabe S."/>
            <person name="Tanimoto Y."/>
            <person name="Yamauchi S."/>
            <person name="Tozawa Y."/>
            <person name="Sawayama S."/>
            <person name="Watanabe Y."/>
        </authorList>
    </citation>
    <scope>FUNCTION</scope>
    <scope>CATALYTIC ACTIVITY</scope>
    <scope>SUBUNIT</scope>
    <scope>BIOPHYSICOCHEMICAL PROPERTIES</scope>
    <source>
        <strain>ATCC 15692 / DSM 22644 / CIP 104116 / JCM 14847 / LMG 12228 / 1C / PRS 101 / PAO1</strain>
    </source>
</reference>
<reference key="3">
    <citation type="journal article" date="2014" name="Elife">
        <title>Prediction and characterization of enzymatic activities guided by sequence similarity and genome neighborhood networks.</title>
        <authorList>
            <person name="Zhao S."/>
            <person name="Sakai A."/>
            <person name="Zhang X."/>
            <person name="Vetting M.W."/>
            <person name="Kumar R."/>
            <person name="Hillerich B."/>
            <person name="San Francisco B."/>
            <person name="Solbiati J."/>
            <person name="Steves A."/>
            <person name="Brown S."/>
            <person name="Akiva E."/>
            <person name="Barber A."/>
            <person name="Seidel R.D."/>
            <person name="Babbitt P.C."/>
            <person name="Almo S.C."/>
            <person name="Gerlt J.A."/>
            <person name="Jacobson M.P."/>
        </authorList>
    </citation>
    <scope>FUNCTION</scope>
    <scope>CATALYTIC ACTIVITY</scope>
    <scope>BIOPHYSICOCHEMICAL PROPERTIES</scope>
    <source>
        <strain>ATCC 15692 / DSM 22644 / CIP 104116 / JCM 14847 / LMG 12228 / 1C / PRS 101 / PAO1</strain>
    </source>
</reference>
<reference key="4">
    <citation type="journal article" date="2016" name="Sci. Rep.">
        <title>Functional characterization of aconitase X as a cis-3-hydroxy-L-proline dehydratase.</title>
        <authorList>
            <person name="Watanabe S."/>
            <person name="Tajima K."/>
            <person name="Fujii S."/>
            <person name="Fukumori F."/>
            <person name="Hara R."/>
            <person name="Fukuda R."/>
            <person name="Miyazaki M."/>
            <person name="Kino K."/>
            <person name="Watanabe Y."/>
        </authorList>
    </citation>
    <scope>CATALYTIC ACTIVITY</scope>
    <scope>INDUCTION</scope>
    <source>
        <strain evidence="7">ATCC 15692 / DSM 22644 / CIP 104116 / JCM 14847 / LMG 12228 / 1C / PRS 101 / PAO1</strain>
    </source>
</reference>
<comment type="function">
    <text evidence="2 3">Catalyzes the reduction of both Delta(1)-pyrroline-2-carboxylate (Pyr2C) and Delta(1)-piperideine-2-carboxylate (Pip2C) to L-proline and L-pipecolate, respectively, using NADPH as the electron donor. Cannot use NADH instead of NADPH. Is likely involved in a degradation pathway that converts trans-3-hydroxy-L-proline (t3LHyp) to L-proline, which would allow P.aeruginosa to grow on t3LHyp as a sole carbon source. Can also catalyze the reverse oxidation reactions, albeit at a much lower rate. Is also able to use Delta(1)-pyrroline-(4S)-hydroxy-2-carboxylate (Pyr4SH2C) and cis-4-hydroxy-L-proline (c4LHyp) as substrates, and might be involved in the metabolism of c4LHyp, a compound which is generated by the hydroxylation of free L-proline in bacteria.</text>
</comment>
<comment type="catalytic activity">
    <reaction evidence="2">
        <text>L-pipecolate + NADP(+) = Delta(1)-piperideine-2-carboxylate + NADPH + H(+)</text>
        <dbReference type="Rhea" id="RHEA:12524"/>
        <dbReference type="ChEBI" id="CHEBI:15378"/>
        <dbReference type="ChEBI" id="CHEBI:57783"/>
        <dbReference type="ChEBI" id="CHEBI:58349"/>
        <dbReference type="ChEBI" id="CHEBI:61185"/>
        <dbReference type="ChEBI" id="CHEBI:77631"/>
        <dbReference type="EC" id="1.5.1.21"/>
    </reaction>
</comment>
<comment type="catalytic activity">
    <reaction evidence="2 3 4">
        <text>L-proline + NADP(+) = 1-pyrroline-2-carboxylate + NADPH + H(+)</text>
        <dbReference type="Rhea" id="RHEA:20317"/>
        <dbReference type="ChEBI" id="CHEBI:15378"/>
        <dbReference type="ChEBI" id="CHEBI:39785"/>
        <dbReference type="ChEBI" id="CHEBI:57783"/>
        <dbReference type="ChEBI" id="CHEBI:58349"/>
        <dbReference type="ChEBI" id="CHEBI:60039"/>
        <dbReference type="EC" id="1.5.1.21"/>
    </reaction>
</comment>
<comment type="catalytic activity">
    <reaction evidence="2">
        <text>cis-4-hydroxy-L-proline + NADP(+) = Delta(1)-pyrroline-(4S)-hydroxy-2-carboxylate + NADPH + 2 H(+)</text>
        <dbReference type="Rhea" id="RHEA:47688"/>
        <dbReference type="ChEBI" id="CHEBI:15378"/>
        <dbReference type="ChEBI" id="CHEBI:57783"/>
        <dbReference type="ChEBI" id="CHEBI:58349"/>
        <dbReference type="ChEBI" id="CHEBI:63727"/>
        <dbReference type="ChEBI" id="CHEBI:87834"/>
    </reaction>
</comment>
<comment type="biophysicochemical properties">
    <kinetics>
        <KM evidence="2">0.447 mM for Delta(1)-pyrroline-2-carboxylate (at pH 7.0)</KM>
        <KM evidence="2">1.57 mM for Delta(1)-piperideine-2-carboxylate (at pH 7.0)</KM>
        <KM evidence="2">0.835 mM for Delta(1)-pyrroline-(4S)-hydroxy-2-carboxylate (at pH 7.0)</KM>
        <KM evidence="2">18.5 mM for L-proline (at pH 10.0)</KM>
        <KM evidence="2">34.8 mM for L-pipecolate (at pH 10.0)</KM>
        <KM evidence="2">132 mM for trans-3-hydroxy-L-proline (at pH 10.0)</KM>
        <KM evidence="3">0.41 mM for Delta(1)-pyrroline-2-carboxylate (using NADPH as cosubstrate)</KM>
        <text evidence="2">kcat is 2500 min(-1) for Pyr2C reduction. kcat is 2120 min(-1) for Pip2C reduction. kcat is 868 min(-1) for Pyr4SH2C reduction. kcat is 205 min(-1) for L-proline oxidation. kcat is 135 min(-1) for L-pipecolate oxidation. kcat is 272 min(-1) for t3LHyp oxidation.</text>
    </kinetics>
    <phDependence>
        <text evidence="2">Optimum pH is 7.0 for Pyr2C reduction and 10.0 for L-proline oxidation.</text>
    </phDependence>
</comment>
<comment type="subunit">
    <text evidence="2">Homodimer.</text>
</comment>
<comment type="induction">
    <text evidence="4">Expression is induced when the bacterium is grown on trans-4-hydroxy-L-proline (t4LHyp) and cis-4-hydroxy-D-proline (c4DHyp) as sole carbon source.</text>
</comment>
<comment type="similarity">
    <text evidence="8">Belongs to the LDH2/MDH2 oxidoreductase family.</text>
</comment>
<feature type="chain" id="PRO_0000083843" description="Delta(1)-pyrroline-2-carboxylate/Delta(1)-piperideine-2-carboxylate reductase">
    <location>
        <begin position="1"/>
        <end position="334"/>
    </location>
</feature>
<feature type="active site" description="Charge relay system" evidence="1">
    <location>
        <position position="44"/>
    </location>
</feature>
<feature type="active site" description="Proton donor" evidence="1">
    <location>
        <position position="45"/>
    </location>
</feature>
<feature type="active site" description="Charge relay system" evidence="1">
    <location>
        <position position="185"/>
    </location>
</feature>
<feature type="binding site" evidence="1">
    <location>
        <position position="49"/>
    </location>
    <ligand>
        <name>substrate</name>
    </ligand>
</feature>
<feature type="binding site" description="in other chain" evidence="1">
    <location>
        <begin position="117"/>
        <end position="121"/>
    </location>
    <ligand>
        <name>NADP(+)</name>
        <dbReference type="ChEBI" id="CHEBI:58349"/>
        <note>ligand shared between dimeric partners</note>
    </ligand>
</feature>
<feature type="binding site" evidence="1">
    <location>
        <position position="157"/>
    </location>
    <ligand>
        <name>substrate</name>
    </ligand>
</feature>
<feature type="binding site" description="in other chain" evidence="1">
    <location>
        <begin position="175"/>
        <end position="177"/>
    </location>
    <ligand>
        <name>NADP(+)</name>
        <dbReference type="ChEBI" id="CHEBI:58349"/>
        <note>ligand shared between dimeric partners</note>
    </ligand>
</feature>
<feature type="binding site" evidence="1">
    <location>
        <begin position="183"/>
        <end position="184"/>
    </location>
    <ligand>
        <name>substrate</name>
    </ligand>
</feature>
<feature type="binding site" evidence="1">
    <location>
        <begin position="226"/>
        <end position="227"/>
    </location>
    <ligand>
        <name>NADP(+)</name>
        <dbReference type="ChEBI" id="CHEBI:58349"/>
        <note>ligand shared between dimeric partners</note>
    </ligand>
</feature>
<feature type="binding site" description="in other chain" evidence="1">
    <location>
        <begin position="301"/>
        <end position="307"/>
    </location>
    <ligand>
        <name>NADP(+)</name>
        <dbReference type="ChEBI" id="CHEBI:58349"/>
        <note>ligand shared between dimeric partners</note>
    </ligand>
</feature>
<accession>Q9I492</accession>
<keyword id="KW-0521">NADP</keyword>
<keyword id="KW-0560">Oxidoreductase</keyword>
<keyword id="KW-1185">Reference proteome</keyword>
<gene>
    <name evidence="5" type="primary">lhpD</name>
    <name evidence="7" type="synonym">lhpH</name>
    <name evidence="5 7 9" type="ordered locus">PA1252</name>
</gene>
<sequence>MIRMTLDEVRELAVRILRRHAFSEAHVQAVADTLVAGERDECASHGIWRLLGCIATLKAGKVSADAEPELHDIAPGLLRVDAHGGFSQCAFRLGLPHLLEKARSQGIAAMAVNRCVHFSALWVEVEALTEAGLVALATTPSHAWVAPAGGRKPIFGTNPIAFGWPRPDGPPFVFDFATSAVARGEIQLHERAGKPIPLGWGVDEQGEPTTDASAALRGAMLTFGGHKGSALAAMVELLAGPLIGDLTSAESLAYDEGSRSSPYGGELLIAIDPRRMLGASAEEHLARAETLFEGIVEQGARLPSQRRFEARERSARDGVTIPEALHRELLALLE</sequence>
<evidence type="ECO:0000250" key="1">
    <source>
        <dbReference type="UniProtKB" id="Q4U331"/>
    </source>
</evidence>
<evidence type="ECO:0000269" key="2">
    <source>
    </source>
</evidence>
<evidence type="ECO:0000269" key="3">
    <source>
    </source>
</evidence>
<evidence type="ECO:0000269" key="4">
    <source>
    </source>
</evidence>
<evidence type="ECO:0000303" key="5">
    <source>
    </source>
</evidence>
<evidence type="ECO:0000303" key="6">
    <source>
    </source>
</evidence>
<evidence type="ECO:0000303" key="7">
    <source>
    </source>
</evidence>
<evidence type="ECO:0000305" key="8"/>
<evidence type="ECO:0000312" key="9">
    <source>
        <dbReference type="EMBL" id="AAG04641.1"/>
    </source>
</evidence>
<protein>
    <recommendedName>
        <fullName evidence="5">Delta(1)-pyrroline-2-carboxylate/Delta(1)-piperideine-2-carboxylate reductase</fullName>
        <shortName evidence="5">Pyr2C/Pip2C reductase</shortName>
        <ecNumber evidence="2 3 4">1.5.1.21</ecNumber>
    </recommendedName>
    <alternativeName>
        <fullName evidence="5">Delta(1)-pyrroline-(4S)-hydroxy-2-carboxylate reductase</fullName>
        <shortName evidence="5">Pyr4SH2C reductase</shortName>
        <ecNumber evidence="2">1.5.1.-</ecNumber>
    </alternativeName>
    <alternativeName>
        <fullName evidence="6">Proline ketimine reductase</fullName>
    </alternativeName>
</protein>
<proteinExistence type="evidence at protein level"/>
<organism>
    <name type="scientific">Pseudomonas aeruginosa (strain ATCC 15692 / DSM 22644 / CIP 104116 / JCM 14847 / LMG 12228 / 1C / PRS 101 / PAO1)</name>
    <dbReference type="NCBI Taxonomy" id="208964"/>
    <lineage>
        <taxon>Bacteria</taxon>
        <taxon>Pseudomonadati</taxon>
        <taxon>Pseudomonadota</taxon>
        <taxon>Gammaproteobacteria</taxon>
        <taxon>Pseudomonadales</taxon>
        <taxon>Pseudomonadaceae</taxon>
        <taxon>Pseudomonas</taxon>
    </lineage>
</organism>
<name>PY2CR_PSEAE</name>
<dbReference type="EC" id="1.5.1.21" evidence="2 3 4"/>
<dbReference type="EC" id="1.5.1.-" evidence="2"/>
<dbReference type="EMBL" id="AE004091">
    <property type="protein sequence ID" value="AAG04641.1"/>
    <property type="molecule type" value="Genomic_DNA"/>
</dbReference>
<dbReference type="PIR" id="B83488">
    <property type="entry name" value="B83488"/>
</dbReference>
<dbReference type="RefSeq" id="NP_249943.1">
    <property type="nucleotide sequence ID" value="NC_002516.2"/>
</dbReference>
<dbReference type="RefSeq" id="WP_003082545.1">
    <property type="nucleotide sequence ID" value="NZ_QZGE01000005.1"/>
</dbReference>
<dbReference type="SMR" id="Q9I492"/>
<dbReference type="FunCoup" id="Q9I492">
    <property type="interactions" value="39"/>
</dbReference>
<dbReference type="STRING" id="208964.PA1252"/>
<dbReference type="PaxDb" id="208964-PA1252"/>
<dbReference type="DNASU" id="881290"/>
<dbReference type="GeneID" id="881290"/>
<dbReference type="KEGG" id="pae:PA1252"/>
<dbReference type="PATRIC" id="fig|208964.12.peg.1300"/>
<dbReference type="PseudoCAP" id="PA1252"/>
<dbReference type="HOGENOM" id="CLU_040452_0_0_6"/>
<dbReference type="InParanoid" id="Q9I492"/>
<dbReference type="OrthoDB" id="9769447at2"/>
<dbReference type="PhylomeDB" id="Q9I492"/>
<dbReference type="BioCyc" id="PAER208964:G1FZ6-1277-MONOMER"/>
<dbReference type="BRENDA" id="1.5.1.21">
    <property type="organism ID" value="5087"/>
</dbReference>
<dbReference type="SABIO-RK" id="Q9I492"/>
<dbReference type="Proteomes" id="UP000002438">
    <property type="component" value="Chromosome"/>
</dbReference>
<dbReference type="GO" id="GO:0047125">
    <property type="term" value="F:delta1-piperideine-2-carboxylate reductase activity"/>
    <property type="evidence" value="ECO:0000314"/>
    <property type="project" value="UniProtKB"/>
</dbReference>
<dbReference type="GO" id="GO:0042802">
    <property type="term" value="F:identical protein binding"/>
    <property type="evidence" value="ECO:0000314"/>
    <property type="project" value="UniProtKB"/>
</dbReference>
<dbReference type="GO" id="GO:0070401">
    <property type="term" value="F:NADP+ binding"/>
    <property type="evidence" value="ECO:0000250"/>
    <property type="project" value="UniProtKB"/>
</dbReference>
<dbReference type="GO" id="GO:0042803">
    <property type="term" value="F:protein homodimerization activity"/>
    <property type="evidence" value="ECO:0000314"/>
    <property type="project" value="UniProtKB"/>
</dbReference>
<dbReference type="GO" id="GO:0050241">
    <property type="term" value="F:pyrroline-2-carboxylate reductase activity"/>
    <property type="evidence" value="ECO:0000314"/>
    <property type="project" value="UniProtKB"/>
</dbReference>
<dbReference type="GO" id="GO:0019470">
    <property type="term" value="P:4-hydroxyproline catabolic process"/>
    <property type="evidence" value="ECO:0000314"/>
    <property type="project" value="PseudoCAP"/>
</dbReference>
<dbReference type="GO" id="GO:0006560">
    <property type="term" value="P:proline metabolic process"/>
    <property type="evidence" value="ECO:0000314"/>
    <property type="project" value="UniProtKB"/>
</dbReference>
<dbReference type="FunFam" id="3.30.1370.60:FF:000002">
    <property type="entry name" value="Malate/L-lactate family dehydrogenase"/>
    <property type="match status" value="1"/>
</dbReference>
<dbReference type="Gene3D" id="1.10.1530.10">
    <property type="match status" value="1"/>
</dbReference>
<dbReference type="Gene3D" id="3.30.1370.60">
    <property type="entry name" value="Hypothetical oxidoreductase yiak, domain 2"/>
    <property type="match status" value="1"/>
</dbReference>
<dbReference type="InterPro" id="IPR043144">
    <property type="entry name" value="Mal/L-sulf/L-lact_DH-like_ah"/>
</dbReference>
<dbReference type="InterPro" id="IPR043143">
    <property type="entry name" value="Mal/L-sulf/L-lact_DH-like_NADP"/>
</dbReference>
<dbReference type="InterPro" id="IPR036111">
    <property type="entry name" value="Mal/L-sulfo/L-lacto_DH-like_sf"/>
</dbReference>
<dbReference type="InterPro" id="IPR003767">
    <property type="entry name" value="Malate/L-lactate_DH-like"/>
</dbReference>
<dbReference type="PANTHER" id="PTHR11091:SF0">
    <property type="entry name" value="MALATE DEHYDROGENASE"/>
    <property type="match status" value="1"/>
</dbReference>
<dbReference type="PANTHER" id="PTHR11091">
    <property type="entry name" value="OXIDOREDUCTASE-RELATED"/>
    <property type="match status" value="1"/>
</dbReference>
<dbReference type="Pfam" id="PF02615">
    <property type="entry name" value="Ldh_2"/>
    <property type="match status" value="1"/>
</dbReference>
<dbReference type="SUPFAM" id="SSF89733">
    <property type="entry name" value="L-sulfolactate dehydrogenase-like"/>
    <property type="match status" value="1"/>
</dbReference>